<proteinExistence type="inferred from homology"/>
<reference key="1">
    <citation type="journal article" date="2005" name="Nature">
        <title>Genome sequencing and analysis of Aspergillus oryzae.</title>
        <authorList>
            <person name="Machida M."/>
            <person name="Asai K."/>
            <person name="Sano M."/>
            <person name="Tanaka T."/>
            <person name="Kumagai T."/>
            <person name="Terai G."/>
            <person name="Kusumoto K."/>
            <person name="Arima T."/>
            <person name="Akita O."/>
            <person name="Kashiwagi Y."/>
            <person name="Abe K."/>
            <person name="Gomi K."/>
            <person name="Horiuchi H."/>
            <person name="Kitamoto K."/>
            <person name="Kobayashi T."/>
            <person name="Takeuchi M."/>
            <person name="Denning D.W."/>
            <person name="Galagan J.E."/>
            <person name="Nierman W.C."/>
            <person name="Yu J."/>
            <person name="Archer D.B."/>
            <person name="Bennett J.W."/>
            <person name="Bhatnagar D."/>
            <person name="Cleveland T.E."/>
            <person name="Fedorova N.D."/>
            <person name="Gotoh O."/>
            <person name="Horikawa H."/>
            <person name="Hosoyama A."/>
            <person name="Ichinomiya M."/>
            <person name="Igarashi R."/>
            <person name="Iwashita K."/>
            <person name="Juvvadi P.R."/>
            <person name="Kato M."/>
            <person name="Kato Y."/>
            <person name="Kin T."/>
            <person name="Kokubun A."/>
            <person name="Maeda H."/>
            <person name="Maeyama N."/>
            <person name="Maruyama J."/>
            <person name="Nagasaki H."/>
            <person name="Nakajima T."/>
            <person name="Oda K."/>
            <person name="Okada K."/>
            <person name="Paulsen I."/>
            <person name="Sakamoto K."/>
            <person name="Sawano T."/>
            <person name="Takahashi M."/>
            <person name="Takase K."/>
            <person name="Terabayashi Y."/>
            <person name="Wortman J.R."/>
            <person name="Yamada O."/>
            <person name="Yamagata Y."/>
            <person name="Anazawa H."/>
            <person name="Hata Y."/>
            <person name="Koide Y."/>
            <person name="Komori T."/>
            <person name="Koyama Y."/>
            <person name="Minetoki T."/>
            <person name="Suharnan S."/>
            <person name="Tanaka A."/>
            <person name="Isono K."/>
            <person name="Kuhara S."/>
            <person name="Ogasawara N."/>
            <person name="Kikuchi H."/>
        </authorList>
    </citation>
    <scope>NUCLEOTIDE SEQUENCE [LARGE SCALE GENOMIC DNA]</scope>
    <source>
        <strain>ATCC 42149 / RIB 40</strain>
    </source>
</reference>
<feature type="signal peptide" evidence="2">
    <location>
        <begin position="1"/>
        <end position="19"/>
    </location>
</feature>
<feature type="chain" id="PRO_0000233064" description="FK506-binding protein 2">
    <location>
        <begin position="20"/>
        <end position="134"/>
    </location>
</feature>
<feature type="domain" description="PPIase FKBP-type" evidence="3">
    <location>
        <begin position="39"/>
        <end position="127"/>
    </location>
</feature>
<feature type="short sequence motif" description="Prevents secretion from ER" evidence="4">
    <location>
        <begin position="131"/>
        <end position="134"/>
    </location>
</feature>
<evidence type="ECO:0000250" key="1"/>
<evidence type="ECO:0000255" key="2"/>
<evidence type="ECO:0000255" key="3">
    <source>
        <dbReference type="PROSITE-ProRule" id="PRU00277"/>
    </source>
</evidence>
<evidence type="ECO:0000255" key="4">
    <source>
        <dbReference type="PROSITE-ProRule" id="PRU10138"/>
    </source>
</evidence>
<evidence type="ECO:0000305" key="5"/>
<name>FKBP2_ASPOR</name>
<keyword id="KW-0256">Endoplasmic reticulum</keyword>
<keyword id="KW-0413">Isomerase</keyword>
<keyword id="KW-1185">Reference proteome</keyword>
<keyword id="KW-0697">Rotamase</keyword>
<keyword id="KW-0732">Signal</keyword>
<organism>
    <name type="scientific">Aspergillus oryzae (strain ATCC 42149 / RIB 40)</name>
    <name type="common">Yellow koji mold</name>
    <dbReference type="NCBI Taxonomy" id="510516"/>
    <lineage>
        <taxon>Eukaryota</taxon>
        <taxon>Fungi</taxon>
        <taxon>Dikarya</taxon>
        <taxon>Ascomycota</taxon>
        <taxon>Pezizomycotina</taxon>
        <taxon>Eurotiomycetes</taxon>
        <taxon>Eurotiomycetidae</taxon>
        <taxon>Eurotiales</taxon>
        <taxon>Aspergillaceae</taxon>
        <taxon>Aspergillus</taxon>
        <taxon>Aspergillus subgen. Circumdati</taxon>
    </lineage>
</organism>
<accession>Q2UPT7</accession>
<protein>
    <recommendedName>
        <fullName>FK506-binding protein 2</fullName>
        <ecNumber>5.2.1.8</ecNumber>
    </recommendedName>
    <alternativeName>
        <fullName>Peptidyl-prolyl cis-trans isomerase</fullName>
        <shortName>PPIase</shortName>
    </alternativeName>
    <alternativeName>
        <fullName>Rotamase</fullName>
    </alternativeName>
</protein>
<sequence>MRFSIFSTLLVSLATLSTAAELGIEKTHEVECTRKTVKGDTVQMHYKGTLQSDGSEFDSSYKRNSPLKFKVGSGMVIKGWDEGLLDMCIGEKRTLTIPPEYGYGSRGVGPIPGGATLIFETELVGIDGVSKDEL</sequence>
<comment type="function">
    <text evidence="1">PPIases accelerate the folding of proteins. It catalyzes the cis-trans isomerization of proline imidic peptide bonds in oligopeptides (By similarity).</text>
</comment>
<comment type="catalytic activity">
    <reaction>
        <text>[protein]-peptidylproline (omega=180) = [protein]-peptidylproline (omega=0)</text>
        <dbReference type="Rhea" id="RHEA:16237"/>
        <dbReference type="Rhea" id="RHEA-COMP:10747"/>
        <dbReference type="Rhea" id="RHEA-COMP:10748"/>
        <dbReference type="ChEBI" id="CHEBI:83833"/>
        <dbReference type="ChEBI" id="CHEBI:83834"/>
        <dbReference type="EC" id="5.2.1.8"/>
    </reaction>
</comment>
<comment type="activity regulation">
    <text evidence="1">Inhibited by both FK506 and rapamycin.</text>
</comment>
<comment type="subcellular location">
    <subcellularLocation>
        <location evidence="4">Endoplasmic reticulum</location>
    </subcellularLocation>
</comment>
<comment type="similarity">
    <text evidence="5">Belongs to the FKBP-type PPIase family. FKBP2 subfamily.</text>
</comment>
<gene>
    <name type="primary">fpr2</name>
    <name type="ORF">AO090005001515</name>
</gene>
<dbReference type="EC" id="5.2.1.8"/>
<dbReference type="EMBL" id="BA000049">
    <property type="protein sequence ID" value="BAE56428.1"/>
    <property type="molecule type" value="Genomic_DNA"/>
</dbReference>
<dbReference type="RefSeq" id="XP_001818430.1">
    <property type="nucleotide sequence ID" value="XM_001818378.2"/>
</dbReference>
<dbReference type="SMR" id="Q2UPT7"/>
<dbReference type="STRING" id="510516.Q2UPT7"/>
<dbReference type="EnsemblFungi" id="BAE56428">
    <property type="protein sequence ID" value="BAE56428"/>
    <property type="gene ID" value="AO090005001515"/>
</dbReference>
<dbReference type="GeneID" id="5990375"/>
<dbReference type="KEGG" id="aor:AO090005001515"/>
<dbReference type="VEuPathDB" id="FungiDB:AO090005001515"/>
<dbReference type="HOGENOM" id="CLU_013615_8_1_1"/>
<dbReference type="OMA" id="VHMHYTG"/>
<dbReference type="OrthoDB" id="103198at5052"/>
<dbReference type="Proteomes" id="UP000006564">
    <property type="component" value="Chromosome 1"/>
</dbReference>
<dbReference type="GO" id="GO:0005783">
    <property type="term" value="C:endoplasmic reticulum"/>
    <property type="evidence" value="ECO:0007669"/>
    <property type="project" value="UniProtKB-SubCell"/>
</dbReference>
<dbReference type="GO" id="GO:0003755">
    <property type="term" value="F:peptidyl-prolyl cis-trans isomerase activity"/>
    <property type="evidence" value="ECO:0007669"/>
    <property type="project" value="UniProtKB-KW"/>
</dbReference>
<dbReference type="GO" id="GO:0061077">
    <property type="term" value="P:chaperone-mediated protein folding"/>
    <property type="evidence" value="ECO:0007669"/>
    <property type="project" value="InterPro"/>
</dbReference>
<dbReference type="FunFam" id="3.10.50.40:FF:000006">
    <property type="entry name" value="Peptidyl-prolyl cis-trans isomerase"/>
    <property type="match status" value="1"/>
</dbReference>
<dbReference type="Gene3D" id="3.10.50.40">
    <property type="match status" value="1"/>
</dbReference>
<dbReference type="InterPro" id="IPR044609">
    <property type="entry name" value="FKBP2/11"/>
</dbReference>
<dbReference type="InterPro" id="IPR046357">
    <property type="entry name" value="PPIase_dom_sf"/>
</dbReference>
<dbReference type="InterPro" id="IPR001179">
    <property type="entry name" value="PPIase_FKBP_dom"/>
</dbReference>
<dbReference type="PANTHER" id="PTHR45779">
    <property type="entry name" value="PEPTIDYLPROLYL ISOMERASE"/>
    <property type="match status" value="1"/>
</dbReference>
<dbReference type="PANTHER" id="PTHR45779:SF7">
    <property type="entry name" value="PEPTIDYLPROLYL ISOMERASE"/>
    <property type="match status" value="1"/>
</dbReference>
<dbReference type="Pfam" id="PF00254">
    <property type="entry name" value="FKBP_C"/>
    <property type="match status" value="1"/>
</dbReference>
<dbReference type="SUPFAM" id="SSF54534">
    <property type="entry name" value="FKBP-like"/>
    <property type="match status" value="1"/>
</dbReference>
<dbReference type="PROSITE" id="PS00014">
    <property type="entry name" value="ER_TARGET"/>
    <property type="match status" value="1"/>
</dbReference>
<dbReference type="PROSITE" id="PS50059">
    <property type="entry name" value="FKBP_PPIASE"/>
    <property type="match status" value="1"/>
</dbReference>